<accession>Q49KW1</accession>
<organism>
    <name type="scientific">Eucalyptus globulus subsp. globulus</name>
    <name type="common">Tasmanian blue gum</name>
    <dbReference type="NCBI Taxonomy" id="71271"/>
    <lineage>
        <taxon>Eukaryota</taxon>
        <taxon>Viridiplantae</taxon>
        <taxon>Streptophyta</taxon>
        <taxon>Embryophyta</taxon>
        <taxon>Tracheophyta</taxon>
        <taxon>Spermatophyta</taxon>
        <taxon>Magnoliopsida</taxon>
        <taxon>eudicotyledons</taxon>
        <taxon>Gunneridae</taxon>
        <taxon>Pentapetalae</taxon>
        <taxon>rosids</taxon>
        <taxon>malvids</taxon>
        <taxon>Myrtales</taxon>
        <taxon>Myrtaceae</taxon>
        <taxon>Myrtoideae</taxon>
        <taxon>Eucalypteae</taxon>
        <taxon>Eucalyptus</taxon>
    </lineage>
</organism>
<gene>
    <name evidence="1" type="primary">rpl16</name>
</gene>
<proteinExistence type="inferred from homology"/>
<reference key="1">
    <citation type="journal article" date="2005" name="DNA Res.">
        <title>Complete nucleotide sequence of the chloroplast genome from the Tasmanian blue gum, Eucalyptus globulus (Myrtaceae).</title>
        <authorList>
            <person name="Steane D.A."/>
        </authorList>
    </citation>
    <scope>NUCLEOTIDE SEQUENCE [LARGE SCALE GENOMIC DNA]</scope>
</reference>
<evidence type="ECO:0000255" key="1">
    <source>
        <dbReference type="HAMAP-Rule" id="MF_01342"/>
    </source>
</evidence>
<evidence type="ECO:0000305" key="2"/>
<dbReference type="EMBL" id="AY780259">
    <property type="protein sequence ID" value="AAX21064.1"/>
    <property type="molecule type" value="Genomic_DNA"/>
</dbReference>
<dbReference type="RefSeq" id="YP_636336.1">
    <property type="nucleotide sequence ID" value="NC_008115.1"/>
</dbReference>
<dbReference type="SMR" id="Q49KW1"/>
<dbReference type="GeneID" id="4108486"/>
<dbReference type="GO" id="GO:0009507">
    <property type="term" value="C:chloroplast"/>
    <property type="evidence" value="ECO:0007669"/>
    <property type="project" value="UniProtKB-SubCell"/>
</dbReference>
<dbReference type="GO" id="GO:0005762">
    <property type="term" value="C:mitochondrial large ribosomal subunit"/>
    <property type="evidence" value="ECO:0007669"/>
    <property type="project" value="TreeGrafter"/>
</dbReference>
<dbReference type="GO" id="GO:0019843">
    <property type="term" value="F:rRNA binding"/>
    <property type="evidence" value="ECO:0007669"/>
    <property type="project" value="InterPro"/>
</dbReference>
<dbReference type="GO" id="GO:0003735">
    <property type="term" value="F:structural constituent of ribosome"/>
    <property type="evidence" value="ECO:0007669"/>
    <property type="project" value="InterPro"/>
</dbReference>
<dbReference type="GO" id="GO:0032543">
    <property type="term" value="P:mitochondrial translation"/>
    <property type="evidence" value="ECO:0007669"/>
    <property type="project" value="TreeGrafter"/>
</dbReference>
<dbReference type="CDD" id="cd01433">
    <property type="entry name" value="Ribosomal_L16_L10e"/>
    <property type="match status" value="1"/>
</dbReference>
<dbReference type="FunFam" id="3.90.1170.10:FF:000001">
    <property type="entry name" value="50S ribosomal protein L16"/>
    <property type="match status" value="1"/>
</dbReference>
<dbReference type="Gene3D" id="3.90.1170.10">
    <property type="entry name" value="Ribosomal protein L10e/L16"/>
    <property type="match status" value="1"/>
</dbReference>
<dbReference type="HAMAP" id="MF_01342">
    <property type="entry name" value="Ribosomal_uL16"/>
    <property type="match status" value="1"/>
</dbReference>
<dbReference type="InterPro" id="IPR047873">
    <property type="entry name" value="Ribosomal_uL16"/>
</dbReference>
<dbReference type="InterPro" id="IPR000114">
    <property type="entry name" value="Ribosomal_uL16_bact-type"/>
</dbReference>
<dbReference type="InterPro" id="IPR020798">
    <property type="entry name" value="Ribosomal_uL16_CS"/>
</dbReference>
<dbReference type="InterPro" id="IPR016180">
    <property type="entry name" value="Ribosomal_uL16_dom"/>
</dbReference>
<dbReference type="InterPro" id="IPR036920">
    <property type="entry name" value="Ribosomal_uL16_sf"/>
</dbReference>
<dbReference type="NCBIfam" id="TIGR01164">
    <property type="entry name" value="rplP_bact"/>
    <property type="match status" value="1"/>
</dbReference>
<dbReference type="PANTHER" id="PTHR12220">
    <property type="entry name" value="50S/60S RIBOSOMAL PROTEIN L16"/>
    <property type="match status" value="1"/>
</dbReference>
<dbReference type="PANTHER" id="PTHR12220:SF13">
    <property type="entry name" value="LARGE RIBOSOMAL SUBUNIT PROTEIN UL16M"/>
    <property type="match status" value="1"/>
</dbReference>
<dbReference type="Pfam" id="PF00252">
    <property type="entry name" value="Ribosomal_L16"/>
    <property type="match status" value="1"/>
</dbReference>
<dbReference type="PRINTS" id="PR00060">
    <property type="entry name" value="RIBOSOMALL16"/>
</dbReference>
<dbReference type="SUPFAM" id="SSF54686">
    <property type="entry name" value="Ribosomal protein L16p/L10e"/>
    <property type="match status" value="1"/>
</dbReference>
<dbReference type="PROSITE" id="PS00586">
    <property type="entry name" value="RIBOSOMAL_L16_1"/>
    <property type="match status" value="1"/>
</dbReference>
<dbReference type="PROSITE" id="PS00701">
    <property type="entry name" value="RIBOSOMAL_L16_2"/>
    <property type="match status" value="1"/>
</dbReference>
<protein>
    <recommendedName>
        <fullName evidence="1">Large ribosomal subunit protein uL16c</fullName>
    </recommendedName>
    <alternativeName>
        <fullName evidence="2">50S ribosomal protein L16, chloroplastic</fullName>
    </alternativeName>
</protein>
<geneLocation type="chloroplast"/>
<keyword id="KW-0150">Chloroplast</keyword>
<keyword id="KW-0934">Plastid</keyword>
<keyword id="KW-0687">Ribonucleoprotein</keyword>
<keyword id="KW-0689">Ribosomal protein</keyword>
<name>RK16_EUCGG</name>
<feature type="chain" id="PRO_0000062281" description="Large ribosomal subunit protein uL16c">
    <location>
        <begin position="1"/>
        <end position="135"/>
    </location>
</feature>
<comment type="subunit">
    <text evidence="1">Part of the 50S ribosomal subunit.</text>
</comment>
<comment type="subcellular location">
    <subcellularLocation>
        <location>Plastid</location>
        <location>Chloroplast</location>
    </subcellularLocation>
</comment>
<comment type="similarity">
    <text evidence="1">Belongs to the universal ribosomal protein uL16 family.</text>
</comment>
<sequence length="135" mass="15318">MLSPKRTRFRKQHRGRMKGISYRGNRICFGKYALQALEPAWITSRQIEAGRRAMTRNVRRGGKIWVRIFPDKPVTVRPTETRMGSGKGSPEYWVAVVKPGRILYEMGGVAENIARKAISIAASKMPIRTQFIISG</sequence>